<protein>
    <recommendedName>
        <fullName evidence="1">Ribonuclease 3</fullName>
        <ecNumber evidence="1">3.1.26.3</ecNumber>
    </recommendedName>
    <alternativeName>
        <fullName evidence="1">Ribonuclease III</fullName>
        <shortName evidence="1">RNase III</shortName>
    </alternativeName>
</protein>
<reference key="1">
    <citation type="journal article" date="2009" name="PLoS Genet.">
        <title>Organised genome dynamics in the Escherichia coli species results in highly diverse adaptive paths.</title>
        <authorList>
            <person name="Touchon M."/>
            <person name="Hoede C."/>
            <person name="Tenaillon O."/>
            <person name="Barbe V."/>
            <person name="Baeriswyl S."/>
            <person name="Bidet P."/>
            <person name="Bingen E."/>
            <person name="Bonacorsi S."/>
            <person name="Bouchier C."/>
            <person name="Bouvet O."/>
            <person name="Calteau A."/>
            <person name="Chiapello H."/>
            <person name="Clermont O."/>
            <person name="Cruveiller S."/>
            <person name="Danchin A."/>
            <person name="Diard M."/>
            <person name="Dossat C."/>
            <person name="Karoui M.E."/>
            <person name="Frapy E."/>
            <person name="Garry L."/>
            <person name="Ghigo J.M."/>
            <person name="Gilles A.M."/>
            <person name="Johnson J."/>
            <person name="Le Bouguenec C."/>
            <person name="Lescat M."/>
            <person name="Mangenot S."/>
            <person name="Martinez-Jehanne V."/>
            <person name="Matic I."/>
            <person name="Nassif X."/>
            <person name="Oztas S."/>
            <person name="Petit M.A."/>
            <person name="Pichon C."/>
            <person name="Rouy Z."/>
            <person name="Ruf C.S."/>
            <person name="Schneider D."/>
            <person name="Tourret J."/>
            <person name="Vacherie B."/>
            <person name="Vallenet D."/>
            <person name="Medigue C."/>
            <person name="Rocha E.P.C."/>
            <person name="Denamur E."/>
        </authorList>
    </citation>
    <scope>NUCLEOTIDE SEQUENCE [LARGE SCALE GENOMIC DNA]</scope>
    <source>
        <strain>UMN026 / ExPEC</strain>
    </source>
</reference>
<gene>
    <name evidence="1" type="primary">rnc</name>
    <name type="ordered locus">ECUMN_2888</name>
</gene>
<name>RNC_ECOLU</name>
<comment type="function">
    <text evidence="1">Digests double-stranded RNA. Involved in the processing of primary rRNA transcript to yield the immediate precursors to the large and small rRNAs (23S and 16S). Processes some mRNAs, and tRNAs when they are encoded in the rRNA operon. Processes pre-crRNA and tracrRNA of type II CRISPR loci if present in the organism.</text>
</comment>
<comment type="catalytic activity">
    <reaction evidence="1">
        <text>Endonucleolytic cleavage to 5'-phosphomonoester.</text>
        <dbReference type="EC" id="3.1.26.3"/>
    </reaction>
</comment>
<comment type="cofactor">
    <cofactor evidence="1">
        <name>Mg(2+)</name>
        <dbReference type="ChEBI" id="CHEBI:18420"/>
    </cofactor>
</comment>
<comment type="subunit">
    <text evidence="1">Homodimer.</text>
</comment>
<comment type="subcellular location">
    <subcellularLocation>
        <location evidence="1">Cytoplasm</location>
    </subcellularLocation>
</comment>
<comment type="similarity">
    <text evidence="1">Belongs to the ribonuclease III family.</text>
</comment>
<sequence>MNPIVINRLQRKLGYTFNHQELLQQALTHRSASSKHNERLEFLGDSILSYVIANALYHRFPRVDEGDMSRMRATLVRGNTLAELAREFELGECLRLGPGELKSGGFRRESILADTVEALIGGVFLDSDIQTVEKLILNWYQTRLDEISPGDKQKDPKTRLQEYLQGRHLPLPTYLVVQVRGEAHDQEFTIHCQVSGLSEPVVGTGSSRRKAEQAAAEQALKKLELE</sequence>
<proteinExistence type="inferred from homology"/>
<accession>B7N6F5</accession>
<dbReference type="EC" id="3.1.26.3" evidence="1"/>
<dbReference type="EMBL" id="CU928163">
    <property type="protein sequence ID" value="CAR14064.1"/>
    <property type="molecule type" value="Genomic_DNA"/>
</dbReference>
<dbReference type="RefSeq" id="WP_001068343.1">
    <property type="nucleotide sequence ID" value="NC_011751.1"/>
</dbReference>
<dbReference type="RefSeq" id="YP_002413590.1">
    <property type="nucleotide sequence ID" value="NC_011751.1"/>
</dbReference>
<dbReference type="SMR" id="B7N6F5"/>
<dbReference type="STRING" id="585056.ECUMN_2888"/>
<dbReference type="GeneID" id="93774524"/>
<dbReference type="KEGG" id="eum:ECUMN_2888"/>
<dbReference type="PATRIC" id="fig|585056.7.peg.3074"/>
<dbReference type="HOGENOM" id="CLU_000907_1_1_6"/>
<dbReference type="Proteomes" id="UP000007097">
    <property type="component" value="Chromosome"/>
</dbReference>
<dbReference type="GO" id="GO:0005737">
    <property type="term" value="C:cytoplasm"/>
    <property type="evidence" value="ECO:0007669"/>
    <property type="project" value="UniProtKB-SubCell"/>
</dbReference>
<dbReference type="GO" id="GO:0003725">
    <property type="term" value="F:double-stranded RNA binding"/>
    <property type="evidence" value="ECO:0007669"/>
    <property type="project" value="TreeGrafter"/>
</dbReference>
<dbReference type="GO" id="GO:0046872">
    <property type="term" value="F:metal ion binding"/>
    <property type="evidence" value="ECO:0007669"/>
    <property type="project" value="UniProtKB-KW"/>
</dbReference>
<dbReference type="GO" id="GO:0004525">
    <property type="term" value="F:ribonuclease III activity"/>
    <property type="evidence" value="ECO:0007669"/>
    <property type="project" value="UniProtKB-UniRule"/>
</dbReference>
<dbReference type="GO" id="GO:0019843">
    <property type="term" value="F:rRNA binding"/>
    <property type="evidence" value="ECO:0007669"/>
    <property type="project" value="UniProtKB-KW"/>
</dbReference>
<dbReference type="GO" id="GO:0006397">
    <property type="term" value="P:mRNA processing"/>
    <property type="evidence" value="ECO:0007669"/>
    <property type="project" value="UniProtKB-UniRule"/>
</dbReference>
<dbReference type="GO" id="GO:0010468">
    <property type="term" value="P:regulation of gene expression"/>
    <property type="evidence" value="ECO:0007669"/>
    <property type="project" value="TreeGrafter"/>
</dbReference>
<dbReference type="GO" id="GO:0006364">
    <property type="term" value="P:rRNA processing"/>
    <property type="evidence" value="ECO:0007669"/>
    <property type="project" value="UniProtKB-UniRule"/>
</dbReference>
<dbReference type="GO" id="GO:0008033">
    <property type="term" value="P:tRNA processing"/>
    <property type="evidence" value="ECO:0007669"/>
    <property type="project" value="UniProtKB-KW"/>
</dbReference>
<dbReference type="CDD" id="cd10845">
    <property type="entry name" value="DSRM_RNAse_III_family"/>
    <property type="match status" value="1"/>
</dbReference>
<dbReference type="CDD" id="cd00593">
    <property type="entry name" value="RIBOc"/>
    <property type="match status" value="1"/>
</dbReference>
<dbReference type="FunFam" id="1.10.1520.10:FF:000001">
    <property type="entry name" value="Ribonuclease 3"/>
    <property type="match status" value="1"/>
</dbReference>
<dbReference type="FunFam" id="3.30.160.20:FF:000003">
    <property type="entry name" value="Ribonuclease 3"/>
    <property type="match status" value="1"/>
</dbReference>
<dbReference type="Gene3D" id="3.30.160.20">
    <property type="match status" value="1"/>
</dbReference>
<dbReference type="Gene3D" id="1.10.1520.10">
    <property type="entry name" value="Ribonuclease III domain"/>
    <property type="match status" value="1"/>
</dbReference>
<dbReference type="HAMAP" id="MF_00104">
    <property type="entry name" value="RNase_III"/>
    <property type="match status" value="1"/>
</dbReference>
<dbReference type="InterPro" id="IPR014720">
    <property type="entry name" value="dsRBD_dom"/>
</dbReference>
<dbReference type="InterPro" id="IPR011907">
    <property type="entry name" value="RNase_III"/>
</dbReference>
<dbReference type="InterPro" id="IPR000999">
    <property type="entry name" value="RNase_III_dom"/>
</dbReference>
<dbReference type="InterPro" id="IPR036389">
    <property type="entry name" value="RNase_III_sf"/>
</dbReference>
<dbReference type="NCBIfam" id="TIGR02191">
    <property type="entry name" value="RNaseIII"/>
    <property type="match status" value="1"/>
</dbReference>
<dbReference type="PANTHER" id="PTHR11207:SF0">
    <property type="entry name" value="RIBONUCLEASE 3"/>
    <property type="match status" value="1"/>
</dbReference>
<dbReference type="PANTHER" id="PTHR11207">
    <property type="entry name" value="RIBONUCLEASE III"/>
    <property type="match status" value="1"/>
</dbReference>
<dbReference type="Pfam" id="PF00035">
    <property type="entry name" value="dsrm"/>
    <property type="match status" value="1"/>
</dbReference>
<dbReference type="Pfam" id="PF14622">
    <property type="entry name" value="Ribonucleas_3_3"/>
    <property type="match status" value="1"/>
</dbReference>
<dbReference type="SMART" id="SM00358">
    <property type="entry name" value="DSRM"/>
    <property type="match status" value="1"/>
</dbReference>
<dbReference type="SMART" id="SM00535">
    <property type="entry name" value="RIBOc"/>
    <property type="match status" value="1"/>
</dbReference>
<dbReference type="SUPFAM" id="SSF54768">
    <property type="entry name" value="dsRNA-binding domain-like"/>
    <property type="match status" value="1"/>
</dbReference>
<dbReference type="SUPFAM" id="SSF69065">
    <property type="entry name" value="RNase III domain-like"/>
    <property type="match status" value="1"/>
</dbReference>
<dbReference type="PROSITE" id="PS50137">
    <property type="entry name" value="DS_RBD"/>
    <property type="match status" value="1"/>
</dbReference>
<dbReference type="PROSITE" id="PS00517">
    <property type="entry name" value="RNASE_3_1"/>
    <property type="match status" value="1"/>
</dbReference>
<dbReference type="PROSITE" id="PS50142">
    <property type="entry name" value="RNASE_3_2"/>
    <property type="match status" value="1"/>
</dbReference>
<organism>
    <name type="scientific">Escherichia coli O17:K52:H18 (strain UMN026 / ExPEC)</name>
    <dbReference type="NCBI Taxonomy" id="585056"/>
    <lineage>
        <taxon>Bacteria</taxon>
        <taxon>Pseudomonadati</taxon>
        <taxon>Pseudomonadota</taxon>
        <taxon>Gammaproteobacteria</taxon>
        <taxon>Enterobacterales</taxon>
        <taxon>Enterobacteriaceae</taxon>
        <taxon>Escherichia</taxon>
    </lineage>
</organism>
<feature type="chain" id="PRO_1000194424" description="Ribonuclease 3">
    <location>
        <begin position="1"/>
        <end position="226"/>
    </location>
</feature>
<feature type="domain" description="RNase III" evidence="1">
    <location>
        <begin position="6"/>
        <end position="128"/>
    </location>
</feature>
<feature type="domain" description="DRBM" evidence="1">
    <location>
        <begin position="155"/>
        <end position="225"/>
    </location>
</feature>
<feature type="active site" evidence="1">
    <location>
        <position position="45"/>
    </location>
</feature>
<feature type="active site" evidence="1">
    <location>
        <position position="117"/>
    </location>
</feature>
<feature type="binding site" evidence="1">
    <location>
        <position position="41"/>
    </location>
    <ligand>
        <name>Mg(2+)</name>
        <dbReference type="ChEBI" id="CHEBI:18420"/>
    </ligand>
</feature>
<feature type="binding site" evidence="1">
    <location>
        <position position="114"/>
    </location>
    <ligand>
        <name>Mg(2+)</name>
        <dbReference type="ChEBI" id="CHEBI:18420"/>
    </ligand>
</feature>
<feature type="binding site" evidence="1">
    <location>
        <position position="117"/>
    </location>
    <ligand>
        <name>Mg(2+)</name>
        <dbReference type="ChEBI" id="CHEBI:18420"/>
    </ligand>
</feature>
<evidence type="ECO:0000255" key="1">
    <source>
        <dbReference type="HAMAP-Rule" id="MF_00104"/>
    </source>
</evidence>
<keyword id="KW-0963">Cytoplasm</keyword>
<keyword id="KW-0255">Endonuclease</keyword>
<keyword id="KW-0378">Hydrolase</keyword>
<keyword id="KW-0460">Magnesium</keyword>
<keyword id="KW-0479">Metal-binding</keyword>
<keyword id="KW-0507">mRNA processing</keyword>
<keyword id="KW-0540">Nuclease</keyword>
<keyword id="KW-0694">RNA-binding</keyword>
<keyword id="KW-0698">rRNA processing</keyword>
<keyword id="KW-0699">rRNA-binding</keyword>
<keyword id="KW-0819">tRNA processing</keyword>